<name>PDI54_ORYSJ</name>
<proteinExistence type="evidence at transcript level"/>
<gene>
    <name type="primary">PDIL5-4</name>
    <name type="synonym">PDIL8-1</name>
    <name type="ordered locus">Os07g0524100</name>
    <name type="ordered locus">LOC_Os07g34030</name>
    <name type="ORF">OsJ_24505</name>
    <name type="ORF">OSJNBb0052O11.108</name>
</gene>
<keyword id="KW-0472">Membrane</keyword>
<keyword id="KW-1185">Reference proteome</keyword>
<keyword id="KW-0732">Signal</keyword>
<keyword id="KW-0812">Transmembrane</keyword>
<keyword id="KW-1133">Transmembrane helix</keyword>
<sequence length="485" mass="54434">MISSSKLKSVDFYRKIPRDLTEASLSGAGLSIVAALAMVFLFGMELSNYLAVNTSTSVIVDRSSDGEFLRIDFNLSFPALSCEFASVDVSDVLGTNRLNITKTVRKYSIDRNLVPTGSEFHPGPIPTVSKHGDDVEENHDDGSVPLSSRNFDSYSHQYPVLVVNFYAPWCYWSNRLKPSWEKTAKIMRERYDPEMDGRIILAKVDCTEEIDLCRRHHIQGYPSIRIFRKGSDLKENQGHHDHESYYGDRDTESLVAAMETYVANIPKDAHVLALEDKSNKTVDPAKRPAPLTSGCRIEGFVRVKKVPGSVVISARSGSHSFDPSQINVSHYVTQFSFGKRLSAKMFNELKRLTPYVGGHHDRLAGQSYIVKHGDVNANVTIEHYLQIVKTELVTLRSSKELKLVEEYEYTAHSSLVHSFYVPVVKFHFEPSPMQVLVTELPKSFSHFITNVCAIIGGVFTVAGILDSIFHNTLRLVKKVELGKNI</sequence>
<dbReference type="EMBL" id="AP005105">
    <property type="protein sequence ID" value="BAD30858.1"/>
    <property type="molecule type" value="Genomic_DNA"/>
</dbReference>
<dbReference type="EMBL" id="AP008213">
    <property type="protein sequence ID" value="BAF21735.1"/>
    <property type="molecule type" value="Genomic_DNA"/>
</dbReference>
<dbReference type="EMBL" id="AP014963">
    <property type="protein sequence ID" value="BAT01838.1"/>
    <property type="molecule type" value="Genomic_DNA"/>
</dbReference>
<dbReference type="EMBL" id="CM000144">
    <property type="protein sequence ID" value="EEE67299.1"/>
    <property type="molecule type" value="Genomic_DNA"/>
</dbReference>
<dbReference type="EMBL" id="AK099660">
    <property type="protein sequence ID" value="BAG94243.1"/>
    <property type="molecule type" value="mRNA"/>
</dbReference>
<dbReference type="RefSeq" id="XP_015647888.1">
    <property type="nucleotide sequence ID" value="XM_015792402.1"/>
</dbReference>
<dbReference type="FunCoup" id="Q69SA9">
    <property type="interactions" value="632"/>
</dbReference>
<dbReference type="STRING" id="39947.Q69SA9"/>
<dbReference type="PaxDb" id="39947-Q69SA9"/>
<dbReference type="EnsemblPlants" id="Os07t0524100-01">
    <property type="protein sequence ID" value="Os07t0524100-01"/>
    <property type="gene ID" value="Os07g0524100"/>
</dbReference>
<dbReference type="Gramene" id="Os07t0524100-01">
    <property type="protein sequence ID" value="Os07t0524100-01"/>
    <property type="gene ID" value="Os07g0524100"/>
</dbReference>
<dbReference type="KEGG" id="dosa:Os07g0524100"/>
<dbReference type="eggNOG" id="KOG2667">
    <property type="taxonomic scope" value="Eukaryota"/>
</dbReference>
<dbReference type="HOGENOM" id="CLU_034705_3_0_1"/>
<dbReference type="InParanoid" id="Q69SA9"/>
<dbReference type="OMA" id="GNFHVHL"/>
<dbReference type="OrthoDB" id="72053at2759"/>
<dbReference type="Proteomes" id="UP000000763">
    <property type="component" value="Chromosome 7"/>
</dbReference>
<dbReference type="Proteomes" id="UP000007752">
    <property type="component" value="Chromosome 7"/>
</dbReference>
<dbReference type="Proteomes" id="UP000059680">
    <property type="component" value="Chromosome 7"/>
</dbReference>
<dbReference type="GO" id="GO:0030134">
    <property type="term" value="C:COPII-coated ER to Golgi transport vesicle"/>
    <property type="evidence" value="ECO:0000318"/>
    <property type="project" value="GO_Central"/>
</dbReference>
<dbReference type="GO" id="GO:0005783">
    <property type="term" value="C:endoplasmic reticulum"/>
    <property type="evidence" value="ECO:0000318"/>
    <property type="project" value="GO_Central"/>
</dbReference>
<dbReference type="GO" id="GO:0016020">
    <property type="term" value="C:membrane"/>
    <property type="evidence" value="ECO:0007669"/>
    <property type="project" value="UniProtKB-SubCell"/>
</dbReference>
<dbReference type="GO" id="GO:0046907">
    <property type="term" value="P:intracellular transport"/>
    <property type="evidence" value="ECO:0007669"/>
    <property type="project" value="UniProtKB-ARBA"/>
</dbReference>
<dbReference type="CDD" id="cd02961">
    <property type="entry name" value="PDI_a_family"/>
    <property type="match status" value="1"/>
</dbReference>
<dbReference type="FunFam" id="3.40.30.10:FF:000174">
    <property type="entry name" value="Protein disulfide-isomerase 5-4"/>
    <property type="match status" value="1"/>
</dbReference>
<dbReference type="Gene3D" id="3.40.30.10">
    <property type="entry name" value="Glutaredoxin"/>
    <property type="match status" value="1"/>
</dbReference>
<dbReference type="InterPro" id="IPR045888">
    <property type="entry name" value="Erv"/>
</dbReference>
<dbReference type="InterPro" id="IPR012936">
    <property type="entry name" value="Erv_C"/>
</dbReference>
<dbReference type="InterPro" id="IPR039542">
    <property type="entry name" value="Erv_N"/>
</dbReference>
<dbReference type="InterPro" id="IPR036249">
    <property type="entry name" value="Thioredoxin-like_sf"/>
</dbReference>
<dbReference type="InterPro" id="IPR013766">
    <property type="entry name" value="Thioredoxin_domain"/>
</dbReference>
<dbReference type="PANTHER" id="PTHR10984">
    <property type="entry name" value="ENDOPLASMIC RETICULUM-GOLGI INTERMEDIATE COMPARTMENT PROTEIN"/>
    <property type="match status" value="1"/>
</dbReference>
<dbReference type="PANTHER" id="PTHR10984:SF37">
    <property type="entry name" value="PROTEIN DISULFIDE-ISOMERASE 5-3"/>
    <property type="match status" value="1"/>
</dbReference>
<dbReference type="Pfam" id="PF07970">
    <property type="entry name" value="COPIIcoated_ERV"/>
    <property type="match status" value="1"/>
</dbReference>
<dbReference type="Pfam" id="PF13850">
    <property type="entry name" value="ERGIC_N"/>
    <property type="match status" value="1"/>
</dbReference>
<dbReference type="Pfam" id="PF00085">
    <property type="entry name" value="Thioredoxin"/>
    <property type="match status" value="1"/>
</dbReference>
<dbReference type="SUPFAM" id="SSF52833">
    <property type="entry name" value="Thioredoxin-like"/>
    <property type="match status" value="1"/>
</dbReference>
<dbReference type="PROSITE" id="PS51352">
    <property type="entry name" value="THIOREDOXIN_2"/>
    <property type="match status" value="1"/>
</dbReference>
<comment type="function">
    <text evidence="1">Acts as a protein-folding catalyst that interacts with nascent polypeptides to catalyze the formation, isomerization, and reduction or oxidation of disulfide bonds. May play a role in storage protein biogenesis (By similarity).</text>
</comment>
<comment type="subcellular location">
    <subcellularLocation>
        <location evidence="4">Membrane</location>
        <topology>Single-pass membrane protein</topology>
    </subcellularLocation>
</comment>
<comment type="similarity">
    <text evidence="4">Belongs to the protein disulfide isomerase family.</text>
</comment>
<reference key="1">
    <citation type="journal article" date="2005" name="Nature">
        <title>The map-based sequence of the rice genome.</title>
        <authorList>
            <consortium name="International rice genome sequencing project (IRGSP)"/>
        </authorList>
    </citation>
    <scope>NUCLEOTIDE SEQUENCE [LARGE SCALE GENOMIC DNA]</scope>
    <source>
        <strain>cv. Nipponbare</strain>
    </source>
</reference>
<reference key="2">
    <citation type="journal article" date="2008" name="Nucleic Acids Res.">
        <title>The rice annotation project database (RAP-DB): 2008 update.</title>
        <authorList>
            <consortium name="The rice annotation project (RAP)"/>
        </authorList>
    </citation>
    <scope>GENOME REANNOTATION</scope>
    <source>
        <strain>cv. Nipponbare</strain>
    </source>
</reference>
<reference key="3">
    <citation type="journal article" date="2013" name="Rice">
        <title>Improvement of the Oryza sativa Nipponbare reference genome using next generation sequence and optical map data.</title>
        <authorList>
            <person name="Kawahara Y."/>
            <person name="de la Bastide M."/>
            <person name="Hamilton J.P."/>
            <person name="Kanamori H."/>
            <person name="McCombie W.R."/>
            <person name="Ouyang S."/>
            <person name="Schwartz D.C."/>
            <person name="Tanaka T."/>
            <person name="Wu J."/>
            <person name="Zhou S."/>
            <person name="Childs K.L."/>
            <person name="Davidson R.M."/>
            <person name="Lin H."/>
            <person name="Quesada-Ocampo L."/>
            <person name="Vaillancourt B."/>
            <person name="Sakai H."/>
            <person name="Lee S.S."/>
            <person name="Kim J."/>
            <person name="Numa H."/>
            <person name="Itoh T."/>
            <person name="Buell C.R."/>
            <person name="Matsumoto T."/>
        </authorList>
    </citation>
    <scope>GENOME REANNOTATION</scope>
    <source>
        <strain>cv. Nipponbare</strain>
    </source>
</reference>
<reference key="4">
    <citation type="journal article" date="2005" name="PLoS Biol.">
        <title>The genomes of Oryza sativa: a history of duplications.</title>
        <authorList>
            <person name="Yu J."/>
            <person name="Wang J."/>
            <person name="Lin W."/>
            <person name="Li S."/>
            <person name="Li H."/>
            <person name="Zhou J."/>
            <person name="Ni P."/>
            <person name="Dong W."/>
            <person name="Hu S."/>
            <person name="Zeng C."/>
            <person name="Zhang J."/>
            <person name="Zhang Y."/>
            <person name="Li R."/>
            <person name="Xu Z."/>
            <person name="Li S."/>
            <person name="Li X."/>
            <person name="Zheng H."/>
            <person name="Cong L."/>
            <person name="Lin L."/>
            <person name="Yin J."/>
            <person name="Geng J."/>
            <person name="Li G."/>
            <person name="Shi J."/>
            <person name="Liu J."/>
            <person name="Lv H."/>
            <person name="Li J."/>
            <person name="Wang J."/>
            <person name="Deng Y."/>
            <person name="Ran L."/>
            <person name="Shi X."/>
            <person name="Wang X."/>
            <person name="Wu Q."/>
            <person name="Li C."/>
            <person name="Ren X."/>
            <person name="Wang J."/>
            <person name="Wang X."/>
            <person name="Li D."/>
            <person name="Liu D."/>
            <person name="Zhang X."/>
            <person name="Ji Z."/>
            <person name="Zhao W."/>
            <person name="Sun Y."/>
            <person name="Zhang Z."/>
            <person name="Bao J."/>
            <person name="Han Y."/>
            <person name="Dong L."/>
            <person name="Ji J."/>
            <person name="Chen P."/>
            <person name="Wu S."/>
            <person name="Liu J."/>
            <person name="Xiao Y."/>
            <person name="Bu D."/>
            <person name="Tan J."/>
            <person name="Yang L."/>
            <person name="Ye C."/>
            <person name="Zhang J."/>
            <person name="Xu J."/>
            <person name="Zhou Y."/>
            <person name="Yu Y."/>
            <person name="Zhang B."/>
            <person name="Zhuang S."/>
            <person name="Wei H."/>
            <person name="Liu B."/>
            <person name="Lei M."/>
            <person name="Yu H."/>
            <person name="Li Y."/>
            <person name="Xu H."/>
            <person name="Wei S."/>
            <person name="He X."/>
            <person name="Fang L."/>
            <person name="Zhang Z."/>
            <person name="Zhang Y."/>
            <person name="Huang X."/>
            <person name="Su Z."/>
            <person name="Tong W."/>
            <person name="Li J."/>
            <person name="Tong Z."/>
            <person name="Li S."/>
            <person name="Ye J."/>
            <person name="Wang L."/>
            <person name="Fang L."/>
            <person name="Lei T."/>
            <person name="Chen C.-S."/>
            <person name="Chen H.-C."/>
            <person name="Xu Z."/>
            <person name="Li H."/>
            <person name="Huang H."/>
            <person name="Zhang F."/>
            <person name="Xu H."/>
            <person name="Li N."/>
            <person name="Zhao C."/>
            <person name="Li S."/>
            <person name="Dong L."/>
            <person name="Huang Y."/>
            <person name="Li L."/>
            <person name="Xi Y."/>
            <person name="Qi Q."/>
            <person name="Li W."/>
            <person name="Zhang B."/>
            <person name="Hu W."/>
            <person name="Zhang Y."/>
            <person name="Tian X."/>
            <person name="Jiao Y."/>
            <person name="Liang X."/>
            <person name="Jin J."/>
            <person name="Gao L."/>
            <person name="Zheng W."/>
            <person name="Hao B."/>
            <person name="Liu S.-M."/>
            <person name="Wang W."/>
            <person name="Yuan L."/>
            <person name="Cao M."/>
            <person name="McDermott J."/>
            <person name="Samudrala R."/>
            <person name="Wang J."/>
            <person name="Wong G.K.-S."/>
            <person name="Yang H."/>
        </authorList>
    </citation>
    <scope>NUCLEOTIDE SEQUENCE [LARGE SCALE GENOMIC DNA]</scope>
    <source>
        <strain>cv. Nipponbare</strain>
    </source>
</reference>
<reference key="5">
    <citation type="journal article" date="2003" name="Science">
        <title>Collection, mapping, and annotation of over 28,000 cDNA clones from japonica rice.</title>
        <authorList>
            <consortium name="The rice full-length cDNA consortium"/>
        </authorList>
    </citation>
    <scope>NUCLEOTIDE SEQUENCE [LARGE SCALE MRNA]</scope>
    <source>
        <strain>cv. Nipponbare</strain>
    </source>
</reference>
<reference key="6">
    <citation type="journal article" date="2005" name="Plant Physiol.">
        <title>Phylogenetic analyses identify 10 classes of the protein disulfide isomerase family in plants, including single-domain protein disulfide isomerase-related proteins.</title>
        <authorList>
            <person name="Houston N.L."/>
            <person name="Fan C."/>
            <person name="Xiang J.Q."/>
            <person name="Schulze J.M."/>
            <person name="Jung R."/>
            <person name="Boston R.S."/>
        </authorList>
    </citation>
    <scope>GENE FAMILY</scope>
    <scope>NOMENCLATURE</scope>
</reference>
<reference key="7">
    <citation type="journal article" date="2010" name="BMC Plant Biol.">
        <title>The protein disulfide isomerase gene family in bread wheat (T. aestivum L.).</title>
        <authorList>
            <person name="d'Aloisio E."/>
            <person name="Paolacci A.R."/>
            <person name="Dhanapal A.P."/>
            <person name="Tanzarella O.A."/>
            <person name="Porceddu E."/>
            <person name="Ciaffi M."/>
        </authorList>
    </citation>
    <scope>GENE FAMILY</scope>
    <scope>NOMENCLATURE</scope>
</reference>
<feature type="signal peptide">
    <location>
        <begin position="1"/>
        <end status="unknown"/>
    </location>
</feature>
<feature type="chain" id="PRO_0000400039" description="Protein disulfide isomerase-like 5-4">
    <location>
        <begin status="unknown"/>
        <end position="485"/>
    </location>
</feature>
<feature type="transmembrane region" description="Helical" evidence="2">
    <location>
        <begin position="444"/>
        <end position="464"/>
    </location>
</feature>
<feature type="domain" description="Thioredoxin" evidence="3">
    <location>
        <begin position="114"/>
        <end position="263"/>
    </location>
</feature>
<feature type="active site" description="Nucleophile" evidence="1">
    <location>
        <position position="170"/>
    </location>
</feature>
<accession>Q69SA9</accession>
<accession>A0A0P0X7L3</accession>
<organism>
    <name type="scientific">Oryza sativa subsp. japonica</name>
    <name type="common">Rice</name>
    <dbReference type="NCBI Taxonomy" id="39947"/>
    <lineage>
        <taxon>Eukaryota</taxon>
        <taxon>Viridiplantae</taxon>
        <taxon>Streptophyta</taxon>
        <taxon>Embryophyta</taxon>
        <taxon>Tracheophyta</taxon>
        <taxon>Spermatophyta</taxon>
        <taxon>Magnoliopsida</taxon>
        <taxon>Liliopsida</taxon>
        <taxon>Poales</taxon>
        <taxon>Poaceae</taxon>
        <taxon>BOP clade</taxon>
        <taxon>Oryzoideae</taxon>
        <taxon>Oryzeae</taxon>
        <taxon>Oryzinae</taxon>
        <taxon>Oryza</taxon>
        <taxon>Oryza sativa</taxon>
    </lineage>
</organism>
<evidence type="ECO:0000250" key="1"/>
<evidence type="ECO:0000255" key="2"/>
<evidence type="ECO:0000255" key="3">
    <source>
        <dbReference type="PROSITE-ProRule" id="PRU00691"/>
    </source>
</evidence>
<evidence type="ECO:0000305" key="4"/>
<protein>
    <recommendedName>
        <fullName>Protein disulfide isomerase-like 5-4</fullName>
        <shortName>OsPDIL5-4</shortName>
    </recommendedName>
    <alternativeName>
        <fullName>Protein disulfide isomerase-like 8-1</fullName>
        <shortName>OsPDIL8-1</shortName>
    </alternativeName>
</protein>